<feature type="chain" id="PRO_0000102043" description="RecBCD enzyme subunit RecB">
    <location>
        <begin position="1"/>
        <end position="1026"/>
    </location>
</feature>
<feature type="domain" description="UvrD-like helicase ATP-binding" evidence="1">
    <location>
        <begin position="1"/>
        <end position="438"/>
    </location>
</feature>
<feature type="domain" description="UvrD-like helicase C-terminal" evidence="1">
    <location>
        <begin position="452"/>
        <end position="700"/>
    </location>
</feature>
<feature type="region of interest" description="DNA-binding and helicase activity, interacts with RecC" evidence="1">
    <location>
        <begin position="1"/>
        <end position="766"/>
    </location>
</feature>
<feature type="region of interest" description="Nuclease activity, interacts with RecD and RecA" evidence="1">
    <location>
        <begin position="815"/>
        <end position="1026"/>
    </location>
</feature>
<feature type="active site" description="For nuclease activity" evidence="1">
    <location>
        <position position="953"/>
    </location>
</feature>
<feature type="binding site" evidence="1">
    <location>
        <begin position="21"/>
        <end position="28"/>
    </location>
    <ligand>
        <name>ATP</name>
        <dbReference type="ChEBI" id="CHEBI:30616"/>
    </ligand>
</feature>
<feature type="binding site" evidence="1">
    <location>
        <position position="854"/>
    </location>
    <ligand>
        <name>Mg(2+)</name>
        <dbReference type="ChEBI" id="CHEBI:18420"/>
    </ligand>
</feature>
<feature type="binding site" evidence="1">
    <location>
        <position position="940"/>
    </location>
    <ligand>
        <name>Mg(2+)</name>
        <dbReference type="ChEBI" id="CHEBI:18420"/>
    </ligand>
</feature>
<feature type="binding site" evidence="1">
    <location>
        <position position="953"/>
    </location>
    <ligand>
        <name>Mg(2+)</name>
        <dbReference type="ChEBI" id="CHEBI:18420"/>
    </ligand>
</feature>
<feature type="unsure residue" description="L or I">
    <location>
        <position position="125"/>
    </location>
</feature>
<keyword id="KW-0067">ATP-binding</keyword>
<keyword id="KW-0227">DNA damage</keyword>
<keyword id="KW-0234">DNA repair</keyword>
<keyword id="KW-0238">DNA-binding</keyword>
<keyword id="KW-0269">Exonuclease</keyword>
<keyword id="KW-0347">Helicase</keyword>
<keyword id="KW-0378">Hydrolase</keyword>
<keyword id="KW-0413">Isomerase</keyword>
<keyword id="KW-0460">Magnesium</keyword>
<keyword id="KW-0479">Metal-binding</keyword>
<keyword id="KW-0540">Nuclease</keyword>
<keyword id="KW-0547">Nucleotide-binding</keyword>
<gene>
    <name evidence="1" type="primary">recB</name>
    <name type="ordered locus">TC_0007</name>
</gene>
<reference key="1">
    <citation type="journal article" date="2000" name="Nucleic Acids Res.">
        <title>Genome sequences of Chlamydia trachomatis MoPn and Chlamydia pneumoniae AR39.</title>
        <authorList>
            <person name="Read T.D."/>
            <person name="Brunham R.C."/>
            <person name="Shen C."/>
            <person name="Gill S.R."/>
            <person name="Heidelberg J.F."/>
            <person name="White O."/>
            <person name="Hickey E.K."/>
            <person name="Peterson J.D."/>
            <person name="Utterback T.R."/>
            <person name="Berry K.J."/>
            <person name="Bass S."/>
            <person name="Linher K.D."/>
            <person name="Weidman J.F."/>
            <person name="Khouri H.M."/>
            <person name="Craven B."/>
            <person name="Bowman C."/>
            <person name="Dodson R.J."/>
            <person name="Gwinn M.L."/>
            <person name="Nelson W.C."/>
            <person name="DeBoy R.T."/>
            <person name="Kolonay J.F."/>
            <person name="McClarty G."/>
            <person name="Salzberg S.L."/>
            <person name="Eisen J.A."/>
            <person name="Fraser C.M."/>
        </authorList>
    </citation>
    <scope>NUCLEOTIDE SEQUENCE [LARGE SCALE GENOMIC DNA]</scope>
    <source>
        <strain>MoPn / Nigg</strain>
    </source>
</reference>
<proteinExistence type="inferred from homology"/>
<evidence type="ECO:0000255" key="1">
    <source>
        <dbReference type="HAMAP-Rule" id="MF_01485"/>
    </source>
</evidence>
<dbReference type="EC" id="3.1.11.5" evidence="1"/>
<dbReference type="EC" id="5.6.2.4" evidence="1"/>
<dbReference type="EMBL" id="AE002160">
    <property type="protein sequence ID" value="AAF38900.2"/>
    <property type="molecule type" value="Genomic_DNA"/>
</dbReference>
<dbReference type="PIR" id="G81751">
    <property type="entry name" value="G81751"/>
</dbReference>
<dbReference type="RefSeq" id="WP_020966580.1">
    <property type="nucleotide sequence ID" value="NZ_CP063055.1"/>
</dbReference>
<dbReference type="GeneID" id="1245531"/>
<dbReference type="KEGG" id="cmu:TC_0007"/>
<dbReference type="PATRIC" id="fig|243161.6.peg.17"/>
<dbReference type="eggNOG" id="COG1074">
    <property type="taxonomic scope" value="Bacteria"/>
</dbReference>
<dbReference type="HOGENOM" id="CLU_001114_6_3_0"/>
<dbReference type="Proteomes" id="UP000000800">
    <property type="component" value="Chromosome"/>
</dbReference>
<dbReference type="GO" id="GO:0005829">
    <property type="term" value="C:cytosol"/>
    <property type="evidence" value="ECO:0007669"/>
    <property type="project" value="TreeGrafter"/>
</dbReference>
<dbReference type="GO" id="GO:0009338">
    <property type="term" value="C:exodeoxyribonuclease V complex"/>
    <property type="evidence" value="ECO:0007669"/>
    <property type="project" value="TreeGrafter"/>
</dbReference>
<dbReference type="GO" id="GO:0043138">
    <property type="term" value="F:3'-5' DNA helicase activity"/>
    <property type="evidence" value="ECO:0007669"/>
    <property type="project" value="UniProtKB-UniRule"/>
</dbReference>
<dbReference type="GO" id="GO:0005524">
    <property type="term" value="F:ATP binding"/>
    <property type="evidence" value="ECO:0007669"/>
    <property type="project" value="UniProtKB-UniRule"/>
</dbReference>
<dbReference type="GO" id="GO:0016887">
    <property type="term" value="F:ATP hydrolysis activity"/>
    <property type="evidence" value="ECO:0007669"/>
    <property type="project" value="RHEA"/>
</dbReference>
<dbReference type="GO" id="GO:0003677">
    <property type="term" value="F:DNA binding"/>
    <property type="evidence" value="ECO:0007669"/>
    <property type="project" value="UniProtKB-UniRule"/>
</dbReference>
<dbReference type="GO" id="GO:0008854">
    <property type="term" value="F:exodeoxyribonuclease V activity"/>
    <property type="evidence" value="ECO:0007669"/>
    <property type="project" value="UniProtKB-EC"/>
</dbReference>
<dbReference type="GO" id="GO:0000287">
    <property type="term" value="F:magnesium ion binding"/>
    <property type="evidence" value="ECO:0007669"/>
    <property type="project" value="UniProtKB-UniRule"/>
</dbReference>
<dbReference type="GO" id="GO:0000724">
    <property type="term" value="P:double-strand break repair via homologous recombination"/>
    <property type="evidence" value="ECO:0007669"/>
    <property type="project" value="UniProtKB-UniRule"/>
</dbReference>
<dbReference type="Gene3D" id="3.90.320.10">
    <property type="match status" value="1"/>
</dbReference>
<dbReference type="Gene3D" id="3.40.50.300">
    <property type="entry name" value="P-loop containing nucleotide triphosphate hydrolases"/>
    <property type="match status" value="3"/>
</dbReference>
<dbReference type="Gene3D" id="1.10.486.10">
    <property type="entry name" value="PCRA, domain 4"/>
    <property type="match status" value="1"/>
</dbReference>
<dbReference type="Gene3D" id="1.10.3170.10">
    <property type="entry name" value="Recbcd, chain B, domain 2"/>
    <property type="match status" value="1"/>
</dbReference>
<dbReference type="HAMAP" id="MF_01485">
    <property type="entry name" value="RecB"/>
    <property type="match status" value="1"/>
</dbReference>
<dbReference type="InterPro" id="IPR014017">
    <property type="entry name" value="DNA_helicase_UvrD-like_C"/>
</dbReference>
<dbReference type="InterPro" id="IPR000212">
    <property type="entry name" value="DNA_helicase_UvrD/REP"/>
</dbReference>
<dbReference type="InterPro" id="IPR027417">
    <property type="entry name" value="P-loop_NTPase"/>
</dbReference>
<dbReference type="InterPro" id="IPR011604">
    <property type="entry name" value="PDDEXK-like_dom_sf"/>
</dbReference>
<dbReference type="InterPro" id="IPR004586">
    <property type="entry name" value="RecB"/>
</dbReference>
<dbReference type="InterPro" id="IPR011335">
    <property type="entry name" value="Restrct_endonuc-II-like"/>
</dbReference>
<dbReference type="InterPro" id="IPR014016">
    <property type="entry name" value="UvrD-like_ATP-bd"/>
</dbReference>
<dbReference type="NCBIfam" id="TIGR00609">
    <property type="entry name" value="recB"/>
    <property type="match status" value="1"/>
</dbReference>
<dbReference type="PANTHER" id="PTHR11070:SF23">
    <property type="entry name" value="RECBCD ENZYME SUBUNIT RECB"/>
    <property type="match status" value="1"/>
</dbReference>
<dbReference type="PANTHER" id="PTHR11070">
    <property type="entry name" value="UVRD / RECB / PCRA DNA HELICASE FAMILY MEMBER"/>
    <property type="match status" value="1"/>
</dbReference>
<dbReference type="Pfam" id="PF00580">
    <property type="entry name" value="UvrD-helicase"/>
    <property type="match status" value="1"/>
</dbReference>
<dbReference type="Pfam" id="PF13361">
    <property type="entry name" value="UvrD_C"/>
    <property type="match status" value="2"/>
</dbReference>
<dbReference type="SUPFAM" id="SSF52540">
    <property type="entry name" value="P-loop containing nucleoside triphosphate hydrolases"/>
    <property type="match status" value="1"/>
</dbReference>
<dbReference type="SUPFAM" id="SSF52980">
    <property type="entry name" value="Restriction endonuclease-like"/>
    <property type="match status" value="1"/>
</dbReference>
<dbReference type="PROSITE" id="PS51198">
    <property type="entry name" value="UVRD_HELICASE_ATP_BIND"/>
    <property type="match status" value="1"/>
</dbReference>
<dbReference type="PROSITE" id="PS51217">
    <property type="entry name" value="UVRD_HELICASE_CTER"/>
    <property type="match status" value="1"/>
</dbReference>
<sequence>MSSFDIFSPTTSVSGKFFLEASAGTGKTFTIEQVILRSLLEGNVEQTKNILVVTFTNAATNELKLRIQESLKQALTLFSQALSHPETPLPPYVSSQETKVKQLYXKXRNSLATLDEMNIFTIHGLCRFTLEQHFPWVQPIHPSSMFSEPQTIQQYILDYLRQNSWENVLSPKQYAFLSYHHRATTQQTRHLADRLLQDYASTPNLALPPLSITLQKVKNWSSQYKHLSPLSLEELQDFSLRFKQSDLPIDRELPDFVKQFETDPNSLDILFFPGMVQKFQEENRNKKKLGPPFSPLDPFLKDWLLIAQPFCQKEPIFHTLLKSVQQHLKTYCAQSYSHDESIATLESLLAQNDHVVSQLRKQFQLVLIDEFQDTDKRQWKIFSKLFASPDYSGSLFLIGDPKQSIYEWRNADLPTYLQAKNSFPKESQLILDTNYRSTPQLMQALNHLFSLPSPFLETPQTILYHPLQSKGSASTSYSEFRPIHFFTTQDSQEEALWISKTASYLRSTFAIPFGNMAVLVQDYPQALKLITHSTIPMAYCKEKRIFDRTESPYLLILLLEALLYPENQQKIQAILLSRFFHLSATDIHQHLKIFSSLFFMLNTYLHQYSLLATFYKLMGETVFSQTIGETLLQTPLGDIIFQELEELCLYLDKTTENPHHKLFHLINILDTGKYDEELSFSSQSNDDNVLKITTVHSSKGLEYDVVFCSSLNKVKEKSPSVHMREMYVACTRAKKFLFIPFSSIEKRLQSNKKVSALANYANITQHDNIPHLVETLTASHPEFFSSGTQPPESNISIFSEPLPEQEFFSLPILSSQPIYSFSSTTESQYFTEPFQEISSSSLFPGGSLTGTLIHKLLESLSGNFNASLEEITHKAQTLLKNTILEGFESIISEKIYTAFSTKLPFVSGSFALKDVHPYNIRVEETFLLQENGELWQGIVDLFFEHNNRFFIIDWKTSFLGDEPSLYSPDKLLLYIQRQGLDKQGVLYKRAAKKFLHQFNSSLQIEMAFVFIRGIDDKGNGFLQPSP</sequence>
<organism>
    <name type="scientific">Chlamydia muridarum (strain MoPn / Nigg)</name>
    <dbReference type="NCBI Taxonomy" id="243161"/>
    <lineage>
        <taxon>Bacteria</taxon>
        <taxon>Pseudomonadati</taxon>
        <taxon>Chlamydiota</taxon>
        <taxon>Chlamydiia</taxon>
        <taxon>Chlamydiales</taxon>
        <taxon>Chlamydiaceae</taxon>
        <taxon>Chlamydia/Chlamydophila group</taxon>
        <taxon>Chlamydia</taxon>
    </lineage>
</organism>
<protein>
    <recommendedName>
        <fullName evidence="1">RecBCD enzyme subunit RecB</fullName>
        <ecNumber evidence="1">3.1.11.5</ecNumber>
        <ecNumber evidence="1">5.6.2.4</ecNumber>
    </recommendedName>
    <alternativeName>
        <fullName evidence="1">DNA 3'-5' helicase subunit RecB</fullName>
    </alternativeName>
    <alternativeName>
        <fullName evidence="1">Exonuclease V subunit RecB</fullName>
        <shortName evidence="1">ExoV subunit RecB</shortName>
    </alternativeName>
    <alternativeName>
        <fullName evidence="1">Helicase/nuclease RecBCD subunit RecB</fullName>
    </alternativeName>
</protein>
<name>RECB_CHLMU</name>
<accession>Q9PLT8</accession>
<comment type="function">
    <text evidence="1">A helicase/nuclease that prepares dsDNA breaks (DSB) for recombinational DNA repair. Binds to DSBs and unwinds DNA via a highly rapid and processive ATP-dependent bidirectional helicase activity. Unwinds dsDNA until it encounters a Chi (crossover hotspot instigator) sequence from the 3' direction. Cuts ssDNA a few nucleotides 3' to the Chi site. The properties and activities of the enzyme are changed at Chi. The Chi-altered holoenzyme produces a long 3'-ssDNA overhang and facilitates RecA-binding to the ssDNA for homologous DNA recombination and repair. Holoenzyme degrades any linearized DNA that is unable to undergo homologous recombination. In the holoenzyme this subunit contributes ATPase, 3'-5' helicase, exonuclease activity and loads RecA onto ssDNA.</text>
</comment>
<comment type="catalytic activity">
    <reaction evidence="1">
        <text>Exonucleolytic cleavage (in the presence of ATP) in either 5'- to 3'- or 3'- to 5'-direction to yield 5'-phosphooligonucleotides.</text>
        <dbReference type="EC" id="3.1.11.5"/>
    </reaction>
</comment>
<comment type="catalytic activity">
    <reaction evidence="1">
        <text>Couples ATP hydrolysis with the unwinding of duplex DNA by translocating in the 3'-5' direction.</text>
        <dbReference type="EC" id="5.6.2.4"/>
    </reaction>
</comment>
<comment type="catalytic activity">
    <reaction evidence="1">
        <text>ATP + H2O = ADP + phosphate + H(+)</text>
        <dbReference type="Rhea" id="RHEA:13065"/>
        <dbReference type="ChEBI" id="CHEBI:15377"/>
        <dbReference type="ChEBI" id="CHEBI:15378"/>
        <dbReference type="ChEBI" id="CHEBI:30616"/>
        <dbReference type="ChEBI" id="CHEBI:43474"/>
        <dbReference type="ChEBI" id="CHEBI:456216"/>
        <dbReference type="EC" id="5.6.2.4"/>
    </reaction>
</comment>
<comment type="cofactor">
    <cofactor evidence="1">
        <name>Mg(2+)</name>
        <dbReference type="ChEBI" id="CHEBI:18420"/>
    </cofactor>
    <text evidence="1">Binds 1 Mg(2+) ion per subunit.</text>
</comment>
<comment type="subunit">
    <text evidence="1">Heterotrimer of RecB, RecC and RecD. All subunits contribute to DNA-binding. Interacts with RecA.</text>
</comment>
<comment type="domain">
    <text evidence="1">The N-terminal DNA-binding domain is a ssDNA-dependent ATPase and has ATP-dependent 3'-5' helicase function. This domain interacts with RecC.</text>
</comment>
<comment type="domain">
    <text evidence="1">The C-terminal domain has nuclease activity and interacts with RecD. It interacts with RecA, facilitating its loading onto ssDNA.</text>
</comment>
<comment type="miscellaneous">
    <text evidence="1">In the RecBCD complex, RecB has a slow 3'-5' helicase, an exonuclease activity and loads RecA onto ssDNA, RecD has a fast 5'-3' helicase activity, while RecC stimulates the ATPase and processivity of the RecB helicase and contributes to recognition of the Chi site.</text>
</comment>
<comment type="similarity">
    <text evidence="1">Belongs to the helicase family. UvrD subfamily.</text>
</comment>